<evidence type="ECO:0000255" key="1">
    <source>
        <dbReference type="HAMAP-Rule" id="MF_00052"/>
    </source>
</evidence>
<evidence type="ECO:0000255" key="2">
    <source>
        <dbReference type="PROSITE-ProRule" id="PRU01319"/>
    </source>
</evidence>
<proteinExistence type="inferred from homology"/>
<name>RNH2_CYTH3</name>
<feature type="chain" id="PRO_0000334890" description="Ribonuclease HII">
    <location>
        <begin position="1"/>
        <end position="202"/>
    </location>
</feature>
<feature type="domain" description="RNase H type-2" evidence="2">
    <location>
        <begin position="13"/>
        <end position="202"/>
    </location>
</feature>
<feature type="binding site" evidence="1">
    <location>
        <position position="19"/>
    </location>
    <ligand>
        <name>a divalent metal cation</name>
        <dbReference type="ChEBI" id="CHEBI:60240"/>
    </ligand>
</feature>
<feature type="binding site" evidence="1">
    <location>
        <position position="20"/>
    </location>
    <ligand>
        <name>a divalent metal cation</name>
        <dbReference type="ChEBI" id="CHEBI:60240"/>
    </ligand>
</feature>
<feature type="binding site" evidence="1">
    <location>
        <position position="112"/>
    </location>
    <ligand>
        <name>a divalent metal cation</name>
        <dbReference type="ChEBI" id="CHEBI:60240"/>
    </ligand>
</feature>
<dbReference type="EC" id="3.1.26.4" evidence="1"/>
<dbReference type="EMBL" id="CP000383">
    <property type="protein sequence ID" value="ABG60073.1"/>
    <property type="molecule type" value="Genomic_DNA"/>
</dbReference>
<dbReference type="SMR" id="Q11R91"/>
<dbReference type="STRING" id="269798.CHU_2825"/>
<dbReference type="KEGG" id="chu:CHU_2825"/>
<dbReference type="eggNOG" id="COG0164">
    <property type="taxonomic scope" value="Bacteria"/>
</dbReference>
<dbReference type="HOGENOM" id="CLU_036532_3_1_10"/>
<dbReference type="OrthoDB" id="9803420at2"/>
<dbReference type="Proteomes" id="UP000001822">
    <property type="component" value="Chromosome"/>
</dbReference>
<dbReference type="GO" id="GO:0005737">
    <property type="term" value="C:cytoplasm"/>
    <property type="evidence" value="ECO:0007669"/>
    <property type="project" value="UniProtKB-SubCell"/>
</dbReference>
<dbReference type="GO" id="GO:0032299">
    <property type="term" value="C:ribonuclease H2 complex"/>
    <property type="evidence" value="ECO:0007669"/>
    <property type="project" value="TreeGrafter"/>
</dbReference>
<dbReference type="GO" id="GO:0030145">
    <property type="term" value="F:manganese ion binding"/>
    <property type="evidence" value="ECO:0007669"/>
    <property type="project" value="UniProtKB-UniRule"/>
</dbReference>
<dbReference type="GO" id="GO:0003723">
    <property type="term" value="F:RNA binding"/>
    <property type="evidence" value="ECO:0007669"/>
    <property type="project" value="InterPro"/>
</dbReference>
<dbReference type="GO" id="GO:0004523">
    <property type="term" value="F:RNA-DNA hybrid ribonuclease activity"/>
    <property type="evidence" value="ECO:0007669"/>
    <property type="project" value="UniProtKB-UniRule"/>
</dbReference>
<dbReference type="GO" id="GO:0043137">
    <property type="term" value="P:DNA replication, removal of RNA primer"/>
    <property type="evidence" value="ECO:0007669"/>
    <property type="project" value="TreeGrafter"/>
</dbReference>
<dbReference type="GO" id="GO:0006298">
    <property type="term" value="P:mismatch repair"/>
    <property type="evidence" value="ECO:0007669"/>
    <property type="project" value="TreeGrafter"/>
</dbReference>
<dbReference type="CDD" id="cd07182">
    <property type="entry name" value="RNase_HII_bacteria_HII_like"/>
    <property type="match status" value="1"/>
</dbReference>
<dbReference type="Gene3D" id="3.30.420.10">
    <property type="entry name" value="Ribonuclease H-like superfamily/Ribonuclease H"/>
    <property type="match status" value="1"/>
</dbReference>
<dbReference type="HAMAP" id="MF_00052_B">
    <property type="entry name" value="RNase_HII_B"/>
    <property type="match status" value="1"/>
</dbReference>
<dbReference type="InterPro" id="IPR022898">
    <property type="entry name" value="RNase_HII"/>
</dbReference>
<dbReference type="InterPro" id="IPR001352">
    <property type="entry name" value="RNase_HII/HIII"/>
</dbReference>
<dbReference type="InterPro" id="IPR024567">
    <property type="entry name" value="RNase_HII/HIII_dom"/>
</dbReference>
<dbReference type="InterPro" id="IPR012337">
    <property type="entry name" value="RNaseH-like_sf"/>
</dbReference>
<dbReference type="InterPro" id="IPR036397">
    <property type="entry name" value="RNaseH_sf"/>
</dbReference>
<dbReference type="NCBIfam" id="NF000595">
    <property type="entry name" value="PRK00015.1-3"/>
    <property type="match status" value="1"/>
</dbReference>
<dbReference type="PANTHER" id="PTHR10954">
    <property type="entry name" value="RIBONUCLEASE H2 SUBUNIT A"/>
    <property type="match status" value="1"/>
</dbReference>
<dbReference type="PANTHER" id="PTHR10954:SF18">
    <property type="entry name" value="RIBONUCLEASE HII"/>
    <property type="match status" value="1"/>
</dbReference>
<dbReference type="Pfam" id="PF01351">
    <property type="entry name" value="RNase_HII"/>
    <property type="match status" value="1"/>
</dbReference>
<dbReference type="SUPFAM" id="SSF53098">
    <property type="entry name" value="Ribonuclease H-like"/>
    <property type="match status" value="1"/>
</dbReference>
<dbReference type="PROSITE" id="PS51975">
    <property type="entry name" value="RNASE_H_2"/>
    <property type="match status" value="1"/>
</dbReference>
<keyword id="KW-0963">Cytoplasm</keyword>
<keyword id="KW-0255">Endonuclease</keyword>
<keyword id="KW-0378">Hydrolase</keyword>
<keyword id="KW-0464">Manganese</keyword>
<keyword id="KW-0479">Metal-binding</keyword>
<keyword id="KW-0540">Nuclease</keyword>
<keyword id="KW-1185">Reference proteome</keyword>
<gene>
    <name evidence="1" type="primary">rnhB</name>
    <name type="ordered locus">CHU_2825</name>
</gene>
<sequence>MDMSLLSFHSEGKIEAGLDEAGRGCMAGPVVAAAVILPPNYKHSLLNDSKKLTIKQRELLRQDIIRDALDYHVAEVSHTVIDQINILNATMKAMHKAVKGLKKQQPNLLLIDGNRFKQYTGIEHVCIVQGDGLYLSIAAASVLAKTHRDSLMERLAKEHPEYGWDVNAGYATEKHRLAMETHGLTPYHRTSFHFKPKQLDLF</sequence>
<reference key="1">
    <citation type="journal article" date="2007" name="Appl. Environ. Microbiol.">
        <title>Genome sequence of the cellulolytic gliding bacterium Cytophaga hutchinsonii.</title>
        <authorList>
            <person name="Xie G."/>
            <person name="Bruce D.C."/>
            <person name="Challacombe J.F."/>
            <person name="Chertkov O."/>
            <person name="Detter J.C."/>
            <person name="Gilna P."/>
            <person name="Han C.S."/>
            <person name="Lucas S."/>
            <person name="Misra M."/>
            <person name="Myers G.L."/>
            <person name="Richardson P."/>
            <person name="Tapia R."/>
            <person name="Thayer N."/>
            <person name="Thompson L.S."/>
            <person name="Brettin T.S."/>
            <person name="Henrissat B."/>
            <person name="Wilson D.B."/>
            <person name="McBride M.J."/>
        </authorList>
    </citation>
    <scope>NUCLEOTIDE SEQUENCE [LARGE SCALE GENOMIC DNA]</scope>
    <source>
        <strain>ATCC 33406 / DSM 1761 / JCM 20678 / CIP 103989 / IAM 12607 / NBRC 15051 / NCIMB 9469 / D465</strain>
    </source>
</reference>
<protein>
    <recommendedName>
        <fullName evidence="1">Ribonuclease HII</fullName>
        <shortName evidence="1">RNase HII</shortName>
        <ecNumber evidence="1">3.1.26.4</ecNumber>
    </recommendedName>
</protein>
<accession>Q11R91</accession>
<organism>
    <name type="scientific">Cytophaga hutchinsonii (strain ATCC 33406 / DSM 1761 / CIP 103989 / NBRC 15051 / NCIMB 9469 / D465)</name>
    <dbReference type="NCBI Taxonomy" id="269798"/>
    <lineage>
        <taxon>Bacteria</taxon>
        <taxon>Pseudomonadati</taxon>
        <taxon>Bacteroidota</taxon>
        <taxon>Cytophagia</taxon>
        <taxon>Cytophagales</taxon>
        <taxon>Cytophagaceae</taxon>
        <taxon>Cytophaga</taxon>
    </lineage>
</organism>
<comment type="function">
    <text evidence="1">Endonuclease that specifically degrades the RNA of RNA-DNA hybrids.</text>
</comment>
<comment type="catalytic activity">
    <reaction evidence="1">
        <text>Endonucleolytic cleavage to 5'-phosphomonoester.</text>
        <dbReference type="EC" id="3.1.26.4"/>
    </reaction>
</comment>
<comment type="cofactor">
    <cofactor evidence="1">
        <name>Mn(2+)</name>
        <dbReference type="ChEBI" id="CHEBI:29035"/>
    </cofactor>
    <cofactor evidence="1">
        <name>Mg(2+)</name>
        <dbReference type="ChEBI" id="CHEBI:18420"/>
    </cofactor>
    <text evidence="1">Manganese or magnesium. Binds 1 divalent metal ion per monomer in the absence of substrate. May bind a second metal ion after substrate binding.</text>
</comment>
<comment type="subcellular location">
    <subcellularLocation>
        <location evidence="1">Cytoplasm</location>
    </subcellularLocation>
</comment>
<comment type="similarity">
    <text evidence="1">Belongs to the RNase HII family.</text>
</comment>